<organism>
    <name type="scientific">Nitratidesulfovibrio vulgaris (strain DP4)</name>
    <name type="common">Desulfovibrio vulgaris</name>
    <dbReference type="NCBI Taxonomy" id="391774"/>
    <lineage>
        <taxon>Bacteria</taxon>
        <taxon>Pseudomonadati</taxon>
        <taxon>Thermodesulfobacteriota</taxon>
        <taxon>Desulfovibrionia</taxon>
        <taxon>Desulfovibrionales</taxon>
        <taxon>Desulfovibrionaceae</taxon>
        <taxon>Nitratidesulfovibrio</taxon>
    </lineage>
</organism>
<proteinExistence type="inferred from homology"/>
<reference key="1">
    <citation type="journal article" date="2009" name="Environ. Microbiol.">
        <title>Contribution of mobile genetic elements to Desulfovibrio vulgaris genome plasticity.</title>
        <authorList>
            <person name="Walker C.B."/>
            <person name="Stolyar S."/>
            <person name="Chivian D."/>
            <person name="Pinel N."/>
            <person name="Gabster J.A."/>
            <person name="Dehal P.S."/>
            <person name="He Z."/>
            <person name="Yang Z.K."/>
            <person name="Yen H.C."/>
            <person name="Zhou J."/>
            <person name="Wall J.D."/>
            <person name="Hazen T.C."/>
            <person name="Arkin A.P."/>
            <person name="Stahl D.A."/>
        </authorList>
    </citation>
    <scope>NUCLEOTIDE SEQUENCE [LARGE SCALE GENOMIC DNA]</scope>
    <source>
        <strain>DP4</strain>
    </source>
</reference>
<feature type="chain" id="PRO_1000010406" description="Heat-inducible transcription repressor HrcA">
    <location>
        <begin position="1"/>
        <end position="355"/>
    </location>
</feature>
<evidence type="ECO:0000255" key="1">
    <source>
        <dbReference type="HAMAP-Rule" id="MF_00081"/>
    </source>
</evidence>
<gene>
    <name evidence="1" type="primary">hrcA</name>
    <name type="ordered locus">Dvul_2164</name>
</gene>
<dbReference type="EMBL" id="CP000527">
    <property type="protein sequence ID" value="ABM29180.1"/>
    <property type="molecule type" value="Genomic_DNA"/>
</dbReference>
<dbReference type="RefSeq" id="WP_011792696.1">
    <property type="nucleotide sequence ID" value="NC_008751.1"/>
</dbReference>
<dbReference type="SMR" id="A1VFG4"/>
<dbReference type="KEGG" id="dvl:Dvul_2164"/>
<dbReference type="HOGENOM" id="CLU_050019_0_0_7"/>
<dbReference type="Proteomes" id="UP000009173">
    <property type="component" value="Chromosome"/>
</dbReference>
<dbReference type="GO" id="GO:0003677">
    <property type="term" value="F:DNA binding"/>
    <property type="evidence" value="ECO:0007669"/>
    <property type="project" value="InterPro"/>
</dbReference>
<dbReference type="GO" id="GO:0045892">
    <property type="term" value="P:negative regulation of DNA-templated transcription"/>
    <property type="evidence" value="ECO:0007669"/>
    <property type="project" value="UniProtKB-UniRule"/>
</dbReference>
<dbReference type="Gene3D" id="3.30.450.40">
    <property type="match status" value="1"/>
</dbReference>
<dbReference type="Gene3D" id="1.10.10.10">
    <property type="entry name" value="Winged helix-like DNA-binding domain superfamily/Winged helix DNA-binding domain"/>
    <property type="match status" value="1"/>
</dbReference>
<dbReference type="HAMAP" id="MF_00081">
    <property type="entry name" value="HrcA"/>
    <property type="match status" value="1"/>
</dbReference>
<dbReference type="InterPro" id="IPR029016">
    <property type="entry name" value="GAF-like_dom_sf"/>
</dbReference>
<dbReference type="InterPro" id="IPR002571">
    <property type="entry name" value="HrcA"/>
</dbReference>
<dbReference type="InterPro" id="IPR021153">
    <property type="entry name" value="HrcA_C"/>
</dbReference>
<dbReference type="InterPro" id="IPR036388">
    <property type="entry name" value="WH-like_DNA-bd_sf"/>
</dbReference>
<dbReference type="InterPro" id="IPR036390">
    <property type="entry name" value="WH_DNA-bd_sf"/>
</dbReference>
<dbReference type="NCBIfam" id="TIGR00331">
    <property type="entry name" value="hrcA"/>
    <property type="match status" value="1"/>
</dbReference>
<dbReference type="PANTHER" id="PTHR34824">
    <property type="entry name" value="HEAT-INDUCIBLE TRANSCRIPTION REPRESSOR HRCA"/>
    <property type="match status" value="1"/>
</dbReference>
<dbReference type="PANTHER" id="PTHR34824:SF1">
    <property type="entry name" value="HEAT-INDUCIBLE TRANSCRIPTION REPRESSOR HRCA"/>
    <property type="match status" value="1"/>
</dbReference>
<dbReference type="Pfam" id="PF01628">
    <property type="entry name" value="HrcA"/>
    <property type="match status" value="1"/>
</dbReference>
<dbReference type="PIRSF" id="PIRSF005485">
    <property type="entry name" value="HrcA"/>
    <property type="match status" value="1"/>
</dbReference>
<dbReference type="SUPFAM" id="SSF55781">
    <property type="entry name" value="GAF domain-like"/>
    <property type="match status" value="1"/>
</dbReference>
<dbReference type="SUPFAM" id="SSF46785">
    <property type="entry name" value="Winged helix' DNA-binding domain"/>
    <property type="match status" value="1"/>
</dbReference>
<name>HRCA_NITV4</name>
<sequence length="355" mass="38564">MSALGSRETHVLTTIIESYITSAAPVGSRTVSRRSGLALSPASMRNTMSDLTDMGFLEQPHTSAGRIPTPKAFRLYVDALLRQSARRDEAPLHMVEALHGHEPEVGALLRRASNLVSEHARQVSMVLAPGPAEARLRSLDFVPAGEGLVLAVLVLEGGMVRTRLVRDDTHFGSDELVRFGNYINAHYRGHTLSGIRNSIHHELSGGGAQLEAMCAQALALGSLALDSIDDDRELYVNGTRNILDQAEFAELGRMRELMDALEERSRLLELLDRTILEDDVHVTFYPDDVSGAAQRRAPDGLRGCSMVSAPYGGASPLGVIGVIGPVRMDYRKVLPLVGAVSRVLTQLLRERFATG</sequence>
<accession>A1VFG4</accession>
<protein>
    <recommendedName>
        <fullName evidence="1">Heat-inducible transcription repressor HrcA</fullName>
    </recommendedName>
</protein>
<keyword id="KW-0678">Repressor</keyword>
<keyword id="KW-0346">Stress response</keyword>
<keyword id="KW-0804">Transcription</keyword>
<keyword id="KW-0805">Transcription regulation</keyword>
<comment type="function">
    <text evidence="1">Negative regulator of class I heat shock genes (grpE-dnaK-dnaJ and groELS operons). Prevents heat-shock induction of these operons.</text>
</comment>
<comment type="similarity">
    <text evidence="1">Belongs to the HrcA family.</text>
</comment>